<protein>
    <recommendedName>
        <fullName evidence="1">Tagatose 1,6-diphosphate aldolase</fullName>
        <ecNumber evidence="1">4.1.2.40</ecNumber>
    </recommendedName>
    <alternativeName>
        <fullName evidence="1">D-tagatose-1,6-bisphosphate aldolase</fullName>
    </alternativeName>
    <alternativeName>
        <fullName evidence="1">Tagatose-bisphosphate aldolase</fullName>
    </alternativeName>
</protein>
<comment type="catalytic activity">
    <reaction evidence="1">
        <text>D-tagatofuranose 1,6-bisphosphate = D-glyceraldehyde 3-phosphate + dihydroxyacetone phosphate</text>
        <dbReference type="Rhea" id="RHEA:22948"/>
        <dbReference type="ChEBI" id="CHEBI:57642"/>
        <dbReference type="ChEBI" id="CHEBI:58694"/>
        <dbReference type="ChEBI" id="CHEBI:59776"/>
        <dbReference type="EC" id="4.1.2.40"/>
    </reaction>
</comment>
<comment type="pathway">
    <text evidence="1">Carbohydrate metabolism; D-tagatose 6-phosphate degradation; D-glyceraldehyde 3-phosphate and glycerone phosphate from D-tagatose 6-phosphate: step 2/2.</text>
</comment>
<comment type="similarity">
    <text evidence="1">Belongs to the aldolase LacD family.</text>
</comment>
<organism>
    <name type="scientific">Listeria monocytogenes serovar 1/2a (strain ATCC BAA-679 / EGD-e)</name>
    <dbReference type="NCBI Taxonomy" id="169963"/>
    <lineage>
        <taxon>Bacteria</taxon>
        <taxon>Bacillati</taxon>
        <taxon>Bacillota</taxon>
        <taxon>Bacilli</taxon>
        <taxon>Bacillales</taxon>
        <taxon>Listeriaceae</taxon>
        <taxon>Listeria</taxon>
    </lineage>
</organism>
<proteinExistence type="inferred from homology"/>
<reference key="1">
    <citation type="journal article" date="2001" name="Science">
        <title>Comparative genomics of Listeria species.</title>
        <authorList>
            <person name="Glaser P."/>
            <person name="Frangeul L."/>
            <person name="Buchrieser C."/>
            <person name="Rusniok C."/>
            <person name="Amend A."/>
            <person name="Baquero F."/>
            <person name="Berche P."/>
            <person name="Bloecker H."/>
            <person name="Brandt P."/>
            <person name="Chakraborty T."/>
            <person name="Charbit A."/>
            <person name="Chetouani F."/>
            <person name="Couve E."/>
            <person name="de Daruvar A."/>
            <person name="Dehoux P."/>
            <person name="Domann E."/>
            <person name="Dominguez-Bernal G."/>
            <person name="Duchaud E."/>
            <person name="Durant L."/>
            <person name="Dussurget O."/>
            <person name="Entian K.-D."/>
            <person name="Fsihi H."/>
            <person name="Garcia-del Portillo F."/>
            <person name="Garrido P."/>
            <person name="Gautier L."/>
            <person name="Goebel W."/>
            <person name="Gomez-Lopez N."/>
            <person name="Hain T."/>
            <person name="Hauf J."/>
            <person name="Jackson D."/>
            <person name="Jones L.-M."/>
            <person name="Kaerst U."/>
            <person name="Kreft J."/>
            <person name="Kuhn M."/>
            <person name="Kunst F."/>
            <person name="Kurapkat G."/>
            <person name="Madueno E."/>
            <person name="Maitournam A."/>
            <person name="Mata Vicente J."/>
            <person name="Ng E."/>
            <person name="Nedjari H."/>
            <person name="Nordsiek G."/>
            <person name="Novella S."/>
            <person name="de Pablos B."/>
            <person name="Perez-Diaz J.-C."/>
            <person name="Purcell R."/>
            <person name="Remmel B."/>
            <person name="Rose M."/>
            <person name="Schlueter T."/>
            <person name="Simoes N."/>
            <person name="Tierrez A."/>
            <person name="Vazquez-Boland J.-A."/>
            <person name="Voss H."/>
            <person name="Wehland J."/>
            <person name="Cossart P."/>
        </authorList>
    </citation>
    <scope>NUCLEOTIDE SEQUENCE [LARGE SCALE GENOMIC DNA]</scope>
    <source>
        <strain>ATCC BAA-679 / EGD-e</strain>
    </source>
</reference>
<sequence>MVQITKGKFDGLQRLSNDKGVIAALAIDQRGSLKKMIQQAKGTENKKDVEDFKQLVSEELTPYASAILLDLEYGTPAIKARHEGSGLLTSYEKTGYDATTPGKLPDLIEDLSALRIKENGGDAVKILVYYDPDEPAEINEIKYAFLERIGAECRAVDIPFFLEPITYDATVTDSGSLEYAKLKPAKVKASIKEFSKPRYGVDVLKLEVPVNFKYVEGFAEGEVAYTQDEAARHFEECSDLSPLPFIYLSAGVTSEMFHKTIQFANQHNVQYSGVLCGRATWADGIEVYGKQGDDALREWLRTQGKENITSLDKLLDEGAVPWWTKYGSFEDVHVVEKQ</sequence>
<evidence type="ECO:0000255" key="1">
    <source>
        <dbReference type="HAMAP-Rule" id="MF_00734"/>
    </source>
</evidence>
<accession>Q8Y9I9</accession>
<feature type="chain" id="PRO_0000203943" description="Tagatose 1,6-diphosphate aldolase">
    <location>
        <begin position="1"/>
        <end position="338"/>
    </location>
</feature>
<dbReference type="EC" id="4.1.2.40" evidence="1"/>
<dbReference type="EMBL" id="AL591975">
    <property type="protein sequence ID" value="CAC98618.1"/>
    <property type="molecule type" value="Genomic_DNA"/>
</dbReference>
<dbReference type="PIR" id="AD1142">
    <property type="entry name" value="AD1142"/>
</dbReference>
<dbReference type="RefSeq" id="NP_464067.1">
    <property type="nucleotide sequence ID" value="NC_003210.1"/>
</dbReference>
<dbReference type="RefSeq" id="WP_003721333.1">
    <property type="nucleotide sequence ID" value="NZ_CP149495.1"/>
</dbReference>
<dbReference type="SMR" id="Q8Y9I9"/>
<dbReference type="STRING" id="169963.gene:17593190"/>
<dbReference type="PaxDb" id="169963-lmo0539"/>
<dbReference type="EnsemblBacteria" id="CAC98618">
    <property type="protein sequence ID" value="CAC98618"/>
    <property type="gene ID" value="CAC98618"/>
</dbReference>
<dbReference type="GeneID" id="985316"/>
<dbReference type="KEGG" id="lmo:lmo0539"/>
<dbReference type="PATRIC" id="fig|169963.11.peg.558"/>
<dbReference type="eggNOG" id="COG3684">
    <property type="taxonomic scope" value="Bacteria"/>
</dbReference>
<dbReference type="HOGENOM" id="CLU_058971_0_1_9"/>
<dbReference type="OrthoDB" id="106309at2"/>
<dbReference type="PhylomeDB" id="Q8Y9I9"/>
<dbReference type="BioCyc" id="LMON169963:LMO0539-MONOMER"/>
<dbReference type="UniPathway" id="UPA00704">
    <property type="reaction ID" value="UER00716"/>
</dbReference>
<dbReference type="Proteomes" id="UP000000817">
    <property type="component" value="Chromosome"/>
</dbReference>
<dbReference type="GO" id="GO:0061595">
    <property type="term" value="F:6-deoxy-6-sulfofructose-1-phosphate aldolase activity"/>
    <property type="evidence" value="ECO:0000318"/>
    <property type="project" value="GO_Central"/>
</dbReference>
<dbReference type="GO" id="GO:0009024">
    <property type="term" value="F:tagatose-6-phosphate kinase activity"/>
    <property type="evidence" value="ECO:0007669"/>
    <property type="project" value="InterPro"/>
</dbReference>
<dbReference type="GO" id="GO:0009025">
    <property type="term" value="F:tagatose-bisphosphate aldolase activity"/>
    <property type="evidence" value="ECO:0007669"/>
    <property type="project" value="UniProtKB-UniRule"/>
</dbReference>
<dbReference type="GO" id="GO:1902777">
    <property type="term" value="P:6-sulfoquinovose(1-) catabolic process"/>
    <property type="evidence" value="ECO:0000318"/>
    <property type="project" value="GO_Central"/>
</dbReference>
<dbReference type="GO" id="GO:2001059">
    <property type="term" value="P:D-tagatose 6-phosphate catabolic process"/>
    <property type="evidence" value="ECO:0007669"/>
    <property type="project" value="UniProtKB-UniRule"/>
</dbReference>
<dbReference type="GO" id="GO:0019512">
    <property type="term" value="P:lactose catabolic process via tagatose-6-phosphate"/>
    <property type="evidence" value="ECO:0007669"/>
    <property type="project" value="InterPro"/>
</dbReference>
<dbReference type="FunFam" id="3.20.20.70:FF:000137">
    <property type="entry name" value="Tagatose 1,6-diphosphate aldolase 2"/>
    <property type="match status" value="1"/>
</dbReference>
<dbReference type="Gene3D" id="3.20.20.70">
    <property type="entry name" value="Aldolase class I"/>
    <property type="match status" value="1"/>
</dbReference>
<dbReference type="HAMAP" id="MF_00734">
    <property type="entry name" value="LacD"/>
    <property type="match status" value="1"/>
</dbReference>
<dbReference type="InterPro" id="IPR013785">
    <property type="entry name" value="Aldolase_TIM"/>
</dbReference>
<dbReference type="InterPro" id="IPR002915">
    <property type="entry name" value="DeoC/FbaB/LacD_aldolase"/>
</dbReference>
<dbReference type="InterPro" id="IPR050552">
    <property type="entry name" value="LacD_aldolase"/>
</dbReference>
<dbReference type="InterPro" id="IPR005927">
    <property type="entry name" value="Tag_1.6-dipho_adolase"/>
</dbReference>
<dbReference type="NCBIfam" id="NF009065">
    <property type="entry name" value="PRK12399.1"/>
    <property type="match status" value="1"/>
</dbReference>
<dbReference type="NCBIfam" id="NF009498">
    <property type="entry name" value="PRK12858.1"/>
    <property type="match status" value="1"/>
</dbReference>
<dbReference type="PANTHER" id="PTHR39340">
    <property type="entry name" value="SULFOFRUCTOSEPHOSPHATE ALDOLASE"/>
    <property type="match status" value="1"/>
</dbReference>
<dbReference type="PANTHER" id="PTHR39340:SF1">
    <property type="entry name" value="SULFOFRUCTOSEPHOSPHATE ALDOLASE"/>
    <property type="match status" value="1"/>
</dbReference>
<dbReference type="Pfam" id="PF01791">
    <property type="entry name" value="DeoC"/>
    <property type="match status" value="1"/>
</dbReference>
<dbReference type="SMART" id="SM01133">
    <property type="entry name" value="DeoC"/>
    <property type="match status" value="1"/>
</dbReference>
<dbReference type="SUPFAM" id="SSF51569">
    <property type="entry name" value="Aldolase"/>
    <property type="match status" value="1"/>
</dbReference>
<keyword id="KW-0423">Lactose metabolism</keyword>
<keyword id="KW-0456">Lyase</keyword>
<keyword id="KW-1185">Reference proteome</keyword>
<gene>
    <name evidence="1" type="primary">lacD</name>
    <name type="ordered locus">lmo0539</name>
</gene>
<name>LACD_LISMO</name>